<protein>
    <recommendedName>
        <fullName evidence="3">Type II methyltransferase M.Cfr9I</fullName>
        <shortName evidence="2">M.Cfr9I</shortName>
        <ecNumber>2.1.1.113</ecNumber>
    </recommendedName>
    <alternativeName>
        <fullName>Modification methylase Cfr9I</fullName>
    </alternativeName>
    <alternativeName>
        <fullName>N(4)- cytosine-specific methyltransferase Cfr9I</fullName>
    </alternativeName>
</protein>
<name>MTC9_CITFR</name>
<evidence type="ECO:0000256" key="1">
    <source>
        <dbReference type="SAM" id="MobiDB-lite"/>
    </source>
</evidence>
<evidence type="ECO:0000303" key="2">
    <source>
    </source>
</evidence>
<evidence type="ECO:0000303" key="3">
    <source>
    </source>
</evidence>
<evidence type="ECO:0000305" key="4"/>
<evidence type="ECO:0000305" key="5">
    <source>
    </source>
</evidence>
<feature type="chain" id="PRO_0000087927" description="Type II methyltransferase M.Cfr9I">
    <location>
        <begin position="1"/>
        <end position="300"/>
    </location>
</feature>
<feature type="region of interest" description="Disordered" evidence="1">
    <location>
        <begin position="109"/>
        <end position="129"/>
    </location>
</feature>
<keyword id="KW-0238">DNA-binding</keyword>
<keyword id="KW-0489">Methyltransferase</keyword>
<keyword id="KW-0680">Restriction system</keyword>
<keyword id="KW-0949">S-adenosyl-L-methionine</keyword>
<keyword id="KW-0808">Transferase</keyword>
<accession>P14243</accession>
<proteinExistence type="inferred from homology"/>
<sequence>MPSKKSSSPLSVEKLHRSEPLELNGATLFEGDALSVLRRLPSGSVRCIVTSPPYWGLRDYGIDEQIGLESSMTQFLNRLVTIFSEAKRVLTDDGTLWVNIGDGYTSGNRGYRAPDKKNPARAMAVRPDTPEGLKPKDLIGIPWRLAFALQEDGWYLRSDIVWNKPNAMPESVKDRPTRSHEFLFMLTKSEKYYYDWEAVREEKDSGGFRNRRTVWNVNTKPFAGAHFATFPTELIRPCILASTKPGDYVLDPFFGSGTVGVVCQQEDRQYVGIELNPEYVDIAVNRLQGEDTNVIRIAAA</sequence>
<gene>
    <name evidence="2" type="primary">cfr9IM</name>
</gene>
<comment type="function">
    <text evidence="3 5">A beta subtype methylase, recognizes the double-stranded sequence 5'-CCCGGG-3', methylates C-2 on both strands, and protects the DNA from cleavage by the Cfr9I endonuclease.</text>
</comment>
<comment type="catalytic activity">
    <reaction>
        <text>a 2'-deoxycytidine in DNA + S-adenosyl-L-methionine = an N(4)-methyl-2'-deoxycytidine in DNA + S-adenosyl-L-homocysteine + H(+)</text>
        <dbReference type="Rhea" id="RHEA:16857"/>
        <dbReference type="Rhea" id="RHEA-COMP:11369"/>
        <dbReference type="Rhea" id="RHEA-COMP:13674"/>
        <dbReference type="ChEBI" id="CHEBI:15378"/>
        <dbReference type="ChEBI" id="CHEBI:57856"/>
        <dbReference type="ChEBI" id="CHEBI:59789"/>
        <dbReference type="ChEBI" id="CHEBI:85452"/>
        <dbReference type="ChEBI" id="CHEBI:137933"/>
        <dbReference type="EC" id="2.1.1.113"/>
    </reaction>
</comment>
<comment type="similarity">
    <text evidence="4">Belongs to the N(4)/N(6)-methyltransferase family. N(4) subfamily.</text>
</comment>
<dbReference type="EC" id="2.1.1.113"/>
<dbReference type="EMBL" id="X17022">
    <property type="protein sequence ID" value="CAA34887.1"/>
    <property type="molecule type" value="Genomic_DNA"/>
</dbReference>
<dbReference type="EMBL" id="X74517">
    <property type="protein sequence ID" value="CAA52629.1"/>
    <property type="molecule type" value="Genomic_DNA"/>
</dbReference>
<dbReference type="PIR" id="S07540">
    <property type="entry name" value="S07540"/>
</dbReference>
<dbReference type="RefSeq" id="WP_072062234.1">
    <property type="nucleotide sequence ID" value="NZ_JASGAD010000003.1"/>
</dbReference>
<dbReference type="SMR" id="P14243"/>
<dbReference type="REBASE" id="3346">
    <property type="entry name" value="M.Cfr9I"/>
</dbReference>
<dbReference type="KEGG" id="ag:CAA34887"/>
<dbReference type="BRENDA" id="2.1.1.113">
    <property type="organism ID" value="1398"/>
</dbReference>
<dbReference type="PRO" id="PR:P14243"/>
<dbReference type="GO" id="GO:0003677">
    <property type="term" value="F:DNA binding"/>
    <property type="evidence" value="ECO:0007669"/>
    <property type="project" value="UniProtKB-KW"/>
</dbReference>
<dbReference type="GO" id="GO:0008170">
    <property type="term" value="F:N-methyltransferase activity"/>
    <property type="evidence" value="ECO:0007669"/>
    <property type="project" value="InterPro"/>
</dbReference>
<dbReference type="GO" id="GO:0015667">
    <property type="term" value="F:site-specific DNA-methyltransferase (cytosine-N4-specific) activity"/>
    <property type="evidence" value="ECO:0007669"/>
    <property type="project" value="UniProtKB-EC"/>
</dbReference>
<dbReference type="GO" id="GO:0009307">
    <property type="term" value="P:DNA restriction-modification system"/>
    <property type="evidence" value="ECO:0007669"/>
    <property type="project" value="UniProtKB-KW"/>
</dbReference>
<dbReference type="GO" id="GO:0032259">
    <property type="term" value="P:methylation"/>
    <property type="evidence" value="ECO:0007669"/>
    <property type="project" value="UniProtKB-KW"/>
</dbReference>
<dbReference type="Gene3D" id="3.40.50.150">
    <property type="entry name" value="Vaccinia Virus protein VP39"/>
    <property type="match status" value="1"/>
</dbReference>
<dbReference type="InterPro" id="IPR002941">
    <property type="entry name" value="DNA_methylase_N4/N6"/>
</dbReference>
<dbReference type="InterPro" id="IPR017985">
    <property type="entry name" value="MeTrfase_CN4_CS"/>
</dbReference>
<dbReference type="InterPro" id="IPR001091">
    <property type="entry name" value="RM_Methyltransferase"/>
</dbReference>
<dbReference type="InterPro" id="IPR029063">
    <property type="entry name" value="SAM-dependent_MTases_sf"/>
</dbReference>
<dbReference type="Pfam" id="PF01555">
    <property type="entry name" value="N6_N4_Mtase"/>
    <property type="match status" value="1"/>
</dbReference>
<dbReference type="PRINTS" id="PR00508">
    <property type="entry name" value="S21N4MTFRASE"/>
</dbReference>
<dbReference type="SUPFAM" id="SSF53335">
    <property type="entry name" value="S-adenosyl-L-methionine-dependent methyltransferases"/>
    <property type="match status" value="1"/>
</dbReference>
<dbReference type="PROSITE" id="PS00093">
    <property type="entry name" value="N4_MTASE"/>
    <property type="match status" value="1"/>
</dbReference>
<organism>
    <name type="scientific">Citrobacter freundii</name>
    <dbReference type="NCBI Taxonomy" id="546"/>
    <lineage>
        <taxon>Bacteria</taxon>
        <taxon>Pseudomonadati</taxon>
        <taxon>Pseudomonadota</taxon>
        <taxon>Gammaproteobacteria</taxon>
        <taxon>Enterobacterales</taxon>
        <taxon>Enterobacteriaceae</taxon>
        <taxon>Citrobacter</taxon>
        <taxon>Citrobacter freundii complex</taxon>
    </lineage>
</organism>
<reference key="1">
    <citation type="journal article" date="1989" name="Nucleic Acids Res.">
        <title>Sequence motifs characteristic of DNA[cytosine-N4]methyltransferases: similarity to adenine and cytosine-C5 DNA-methylases.</title>
        <authorList>
            <person name="Klimasauskas S."/>
            <person name="Timinskas A."/>
            <person name="Menkevicius S."/>
            <person name="Butkiene D."/>
            <person name="Butkus V."/>
            <person name="Janulaitis A."/>
        </authorList>
    </citation>
    <scope>NUCLEOTIDE SEQUENCE [GENOMIC DNA]</scope>
    <scope>FUNCTION</scope>
    <source>
        <strain>RFL9</strain>
    </source>
</reference>
<reference key="2">
    <citation type="journal article" date="1994" name="Gene">
        <title>Cloning and analysis of translational control for genes encoding the Cfr9I restriction-modification system.</title>
        <authorList>
            <person name="Lubys A."/>
            <person name="Menkevicius S."/>
            <person name="Timinskas A."/>
            <person name="Butkus V."/>
            <person name="Janulaitis A."/>
        </authorList>
    </citation>
    <scope>NUCLEOTIDE SEQUENCE [GENOMIC DNA] OF 258-300</scope>
    <source>
        <strain>RFL9</strain>
    </source>
</reference>
<reference key="3">
    <citation type="journal article" date="2003" name="Nucleic Acids Res.">
        <title>A nomenclature for restriction enzymes, DNA methyltransferases, homing endonucleases and their genes.</title>
        <authorList>
            <person name="Roberts R.J."/>
            <person name="Belfort M."/>
            <person name="Bestor T."/>
            <person name="Bhagwat A.S."/>
            <person name="Bickle T.A."/>
            <person name="Bitinaite J."/>
            <person name="Blumenthal R.M."/>
            <person name="Degtyarev S.K."/>
            <person name="Dryden D.T."/>
            <person name="Dybvig K."/>
            <person name="Firman K."/>
            <person name="Gromova E.S."/>
            <person name="Gumport R.I."/>
            <person name="Halford S.E."/>
            <person name="Hattman S."/>
            <person name="Heitman J."/>
            <person name="Hornby D.P."/>
            <person name="Janulaitis A."/>
            <person name="Jeltsch A."/>
            <person name="Josephsen J."/>
            <person name="Kiss A."/>
            <person name="Klaenhammer T.R."/>
            <person name="Kobayashi I."/>
            <person name="Kong H."/>
            <person name="Krueger D.H."/>
            <person name="Lacks S."/>
            <person name="Marinus M.G."/>
            <person name="Miyahara M."/>
            <person name="Morgan R.D."/>
            <person name="Murray N.E."/>
            <person name="Nagaraja V."/>
            <person name="Piekarowicz A."/>
            <person name="Pingoud A."/>
            <person name="Raleigh E."/>
            <person name="Rao D.N."/>
            <person name="Reich N."/>
            <person name="Repin V.E."/>
            <person name="Selker E.U."/>
            <person name="Shaw P.C."/>
            <person name="Stein D.C."/>
            <person name="Stoddard B.L."/>
            <person name="Szybalski W."/>
            <person name="Trautner T.A."/>
            <person name="Van Etten J.L."/>
            <person name="Vitor J.M."/>
            <person name="Wilson G.G."/>
            <person name="Xu S.Y."/>
        </authorList>
    </citation>
    <scope>NOMENCLATURE</scope>
    <scope>SUBTYPE</scope>
</reference>